<feature type="chain" id="PRO_0000377985" description="Putative FAS1 domain-containing protein 096L">
    <location>
        <begin position="1"/>
        <end position="174"/>
    </location>
</feature>
<feature type="domain" description="FAS1" evidence="1">
    <location>
        <begin position="36"/>
        <end position="171"/>
    </location>
</feature>
<accession>O55719</accession>
<keyword id="KW-1185">Reference proteome</keyword>
<dbReference type="EMBL" id="AF303741">
    <property type="protein sequence ID" value="AAB94430.1"/>
    <property type="molecule type" value="Genomic_DNA"/>
</dbReference>
<dbReference type="PIR" id="T03056">
    <property type="entry name" value="T03056"/>
</dbReference>
<dbReference type="RefSeq" id="NP_149559.1">
    <property type="nucleotide sequence ID" value="NC_003038.1"/>
</dbReference>
<dbReference type="SMR" id="O55719"/>
<dbReference type="KEGG" id="vg:1733253"/>
<dbReference type="OrthoDB" id="35379at10239"/>
<dbReference type="Proteomes" id="UP000001359">
    <property type="component" value="Genome"/>
</dbReference>
<dbReference type="InterPro" id="IPR036378">
    <property type="entry name" value="FAS1_dom_sf"/>
</dbReference>
<dbReference type="InterPro" id="IPR000782">
    <property type="entry name" value="FAS1_domain"/>
</dbReference>
<dbReference type="SUPFAM" id="SSF82153">
    <property type="entry name" value="FAS1 domain"/>
    <property type="match status" value="1"/>
</dbReference>
<dbReference type="PROSITE" id="PS50213">
    <property type="entry name" value="FAS1"/>
    <property type="match status" value="1"/>
</dbReference>
<gene>
    <name type="ORF">IIV6-096L</name>
</gene>
<evidence type="ECO:0000255" key="1">
    <source>
        <dbReference type="PROSITE-ProRule" id="PRU00082"/>
    </source>
</evidence>
<protein>
    <recommendedName>
        <fullName>Putative FAS1 domain-containing protein 096L</fullName>
    </recommendedName>
</protein>
<sequence length="174" mass="19708">MTSSLPESIDGLYRFSSSRGSVVSTHLGGRFPSINPDTLWSKLNECDKCVFFRNMVSKSLYATDYNNANTDVKTIFVPRDSRNNFFNIQNEITPNDFVSSLTIPGQLFIMPKSSPINIKVQNKNKEYLSINIKNVNKGGQAFVQVLDRLWIIVVPNIMCTNGIIHLMEEVYAFD</sequence>
<proteinExistence type="predicted"/>
<organismHost>
    <name type="scientific">Acheta domesticus</name>
    <name type="common">House cricket</name>
    <dbReference type="NCBI Taxonomy" id="6997"/>
</organismHost>
<organismHost>
    <name type="scientific">Chilo suppressalis</name>
    <name type="common">Asiatic rice borer moth</name>
    <dbReference type="NCBI Taxonomy" id="168631"/>
</organismHost>
<organismHost>
    <name type="scientific">Gryllus bimaculatus</name>
    <name type="common">Two-spotted cricket</name>
    <dbReference type="NCBI Taxonomy" id="6999"/>
</organismHost>
<organismHost>
    <name type="scientific">Gryllus campestris</name>
    <dbReference type="NCBI Taxonomy" id="58607"/>
</organismHost>
<organismHost>
    <name type="scientific">Spodoptera frugiperda</name>
    <name type="common">Fall armyworm</name>
    <dbReference type="NCBI Taxonomy" id="7108"/>
</organismHost>
<organism>
    <name type="scientific">Invertebrate iridescent virus 6</name>
    <name type="common">IIV-6</name>
    <name type="synonym">Chilo iridescent virus</name>
    <dbReference type="NCBI Taxonomy" id="176652"/>
    <lineage>
        <taxon>Viruses</taxon>
        <taxon>Varidnaviria</taxon>
        <taxon>Bamfordvirae</taxon>
        <taxon>Nucleocytoviricota</taxon>
        <taxon>Megaviricetes</taxon>
        <taxon>Pimascovirales</taxon>
        <taxon>Iridoviridae</taxon>
        <taxon>Betairidovirinae</taxon>
        <taxon>Iridovirus</taxon>
    </lineage>
</organism>
<reference key="1">
    <citation type="journal article" date="2001" name="Virology">
        <title>Analysis of the first complete DNA sequence of an invertebrate iridovirus: coding strategy of the genome of Chilo iridescent virus.</title>
        <authorList>
            <person name="Jakob N.J."/>
            <person name="Mueller K."/>
            <person name="Bahr U."/>
            <person name="Darai G."/>
        </authorList>
    </citation>
    <scope>NUCLEOTIDE SEQUENCE [LARGE SCALE GENOMIC DNA]</scope>
</reference>
<reference key="2">
    <citation type="journal article" date="2007" name="Virol. J.">
        <title>Comparative genomic analysis of the family Iridoviridae: re-annotating and defining the core set of iridovirus genes.</title>
        <authorList>
            <person name="Eaton H.E."/>
            <person name="Metcalf J."/>
            <person name="Penny E."/>
            <person name="Tcherepanov V."/>
            <person name="Upton C."/>
            <person name="Brunetti C.R."/>
        </authorList>
    </citation>
    <scope>GENOME REANNOTATION</scope>
</reference>
<name>096L_IIV6</name>